<sequence length="236" mass="27436">MKKKLYEGSSKILYSAEEDFLLIMAFSDKAILETGEIVDISGKGVLNNNISSFLMDKLEMIGIENHFIEKINMREQLIQYVEVFPIQVIISSVACSRFVKEFGIDEGYVFDKPIIDFKVRSREFKYPIVNEYQILNFGWLTRDEIKAVKEQALRIYDFLSGLFIGVGIRLVECKLEFGRVFNGEESIIMLTDEISPDNCRLWHINSNEKLGFELLEKEPNKVFESYQLIADRLKEK</sequence>
<gene>
    <name evidence="1" type="primary">purC</name>
    <name type="ordered locus">RrIowa_0355</name>
</gene>
<proteinExistence type="inferred from homology"/>
<comment type="catalytic activity">
    <reaction evidence="1">
        <text>5-amino-1-(5-phospho-D-ribosyl)imidazole-4-carboxylate + L-aspartate + ATP = (2S)-2-[5-amino-1-(5-phospho-beta-D-ribosyl)imidazole-4-carboxamido]succinate + ADP + phosphate + 2 H(+)</text>
        <dbReference type="Rhea" id="RHEA:22628"/>
        <dbReference type="ChEBI" id="CHEBI:15378"/>
        <dbReference type="ChEBI" id="CHEBI:29991"/>
        <dbReference type="ChEBI" id="CHEBI:30616"/>
        <dbReference type="ChEBI" id="CHEBI:43474"/>
        <dbReference type="ChEBI" id="CHEBI:58443"/>
        <dbReference type="ChEBI" id="CHEBI:77657"/>
        <dbReference type="ChEBI" id="CHEBI:456216"/>
        <dbReference type="EC" id="6.3.2.6"/>
    </reaction>
</comment>
<comment type="pathway">
    <text evidence="1">Purine metabolism; IMP biosynthesis via de novo pathway; 5-amino-1-(5-phospho-D-ribosyl)imidazole-4-carboxamide from 5-amino-1-(5-phospho-D-ribosyl)imidazole-4-carboxylate: step 1/2.</text>
</comment>
<comment type="similarity">
    <text evidence="1">Belongs to the SAICAR synthetase family.</text>
</comment>
<organism>
    <name type="scientific">Rickettsia rickettsii (strain Iowa)</name>
    <dbReference type="NCBI Taxonomy" id="452659"/>
    <lineage>
        <taxon>Bacteria</taxon>
        <taxon>Pseudomonadati</taxon>
        <taxon>Pseudomonadota</taxon>
        <taxon>Alphaproteobacteria</taxon>
        <taxon>Rickettsiales</taxon>
        <taxon>Rickettsiaceae</taxon>
        <taxon>Rickettsieae</taxon>
        <taxon>Rickettsia</taxon>
        <taxon>spotted fever group</taxon>
    </lineage>
</organism>
<dbReference type="EC" id="6.3.2.6" evidence="1"/>
<dbReference type="EMBL" id="CP000766">
    <property type="protein sequence ID" value="ABY72253.1"/>
    <property type="molecule type" value="Genomic_DNA"/>
</dbReference>
<dbReference type="RefSeq" id="WP_004996420.1">
    <property type="nucleotide sequence ID" value="NC_010263.3"/>
</dbReference>
<dbReference type="SMR" id="B0BWM7"/>
<dbReference type="KEGG" id="rrj:RrIowa_0355"/>
<dbReference type="eggNOG" id="COG0152">
    <property type="taxonomic scope" value="Bacteria"/>
</dbReference>
<dbReference type="HOGENOM" id="CLU_061495_2_0_5"/>
<dbReference type="UniPathway" id="UPA00074">
    <property type="reaction ID" value="UER00131"/>
</dbReference>
<dbReference type="Proteomes" id="UP000000796">
    <property type="component" value="Chromosome"/>
</dbReference>
<dbReference type="GO" id="GO:0005829">
    <property type="term" value="C:cytosol"/>
    <property type="evidence" value="ECO:0007669"/>
    <property type="project" value="TreeGrafter"/>
</dbReference>
<dbReference type="GO" id="GO:0005524">
    <property type="term" value="F:ATP binding"/>
    <property type="evidence" value="ECO:0007669"/>
    <property type="project" value="UniProtKB-KW"/>
</dbReference>
<dbReference type="GO" id="GO:0004639">
    <property type="term" value="F:phosphoribosylaminoimidazolesuccinocarboxamide synthase activity"/>
    <property type="evidence" value="ECO:0007669"/>
    <property type="project" value="UniProtKB-UniRule"/>
</dbReference>
<dbReference type="GO" id="GO:0006189">
    <property type="term" value="P:'de novo' IMP biosynthetic process"/>
    <property type="evidence" value="ECO:0007669"/>
    <property type="project" value="UniProtKB-UniRule"/>
</dbReference>
<dbReference type="GO" id="GO:0009236">
    <property type="term" value="P:cobalamin biosynthetic process"/>
    <property type="evidence" value="ECO:0007669"/>
    <property type="project" value="InterPro"/>
</dbReference>
<dbReference type="CDD" id="cd01415">
    <property type="entry name" value="SAICAR_synt_PurC"/>
    <property type="match status" value="1"/>
</dbReference>
<dbReference type="Gene3D" id="3.30.470.20">
    <property type="entry name" value="ATP-grasp fold, B domain"/>
    <property type="match status" value="1"/>
</dbReference>
<dbReference type="Gene3D" id="3.30.200.20">
    <property type="entry name" value="Phosphorylase Kinase, domain 1"/>
    <property type="match status" value="1"/>
</dbReference>
<dbReference type="HAMAP" id="MF_00137">
    <property type="entry name" value="SAICAR_synth"/>
    <property type="match status" value="1"/>
</dbReference>
<dbReference type="InterPro" id="IPR028923">
    <property type="entry name" value="SAICAR_synt/ADE2_N"/>
</dbReference>
<dbReference type="InterPro" id="IPR033934">
    <property type="entry name" value="SAICAR_synt_PurC"/>
</dbReference>
<dbReference type="InterPro" id="IPR050089">
    <property type="entry name" value="SAICAR_synthetase"/>
</dbReference>
<dbReference type="PANTHER" id="PTHR43599">
    <property type="entry name" value="MULTIFUNCTIONAL PROTEIN ADE2"/>
    <property type="match status" value="1"/>
</dbReference>
<dbReference type="PANTHER" id="PTHR43599:SF3">
    <property type="entry name" value="SI:DKEY-6E2.2"/>
    <property type="match status" value="1"/>
</dbReference>
<dbReference type="Pfam" id="PF01259">
    <property type="entry name" value="SAICAR_synt"/>
    <property type="match status" value="1"/>
</dbReference>
<dbReference type="SUPFAM" id="SSF56104">
    <property type="entry name" value="SAICAR synthase-like"/>
    <property type="match status" value="1"/>
</dbReference>
<protein>
    <recommendedName>
        <fullName evidence="1">Phosphoribosylaminoimidazole-succinocarboxamide synthase</fullName>
        <ecNumber evidence="1">6.3.2.6</ecNumber>
    </recommendedName>
    <alternativeName>
        <fullName evidence="1">SAICAR synthetase</fullName>
    </alternativeName>
</protein>
<reference key="1">
    <citation type="journal article" date="2008" name="Infect. Immun.">
        <title>Genomic comparison of virulent Rickettsia rickettsii Sheila Smith and avirulent Rickettsia rickettsii Iowa.</title>
        <authorList>
            <person name="Ellison D.W."/>
            <person name="Clark T.R."/>
            <person name="Sturdevant D.E."/>
            <person name="Virtaneva K."/>
            <person name="Porcella S.F."/>
            <person name="Hackstadt T."/>
        </authorList>
    </citation>
    <scope>NUCLEOTIDE SEQUENCE [LARGE SCALE GENOMIC DNA]</scope>
    <source>
        <strain>Iowa</strain>
    </source>
</reference>
<accession>B0BWM7</accession>
<keyword id="KW-0067">ATP-binding</keyword>
<keyword id="KW-0436">Ligase</keyword>
<keyword id="KW-0547">Nucleotide-binding</keyword>
<keyword id="KW-0658">Purine biosynthesis</keyword>
<evidence type="ECO:0000255" key="1">
    <source>
        <dbReference type="HAMAP-Rule" id="MF_00137"/>
    </source>
</evidence>
<name>PUR7_RICRO</name>
<feature type="chain" id="PRO_1000076463" description="Phosphoribosylaminoimidazole-succinocarboxamide synthase">
    <location>
        <begin position="1"/>
        <end position="236"/>
    </location>
</feature>